<name>SOT9_ARATH</name>
<feature type="chain" id="PRO_0000417057" description="Cytosolic sulfotransferase 9">
    <location>
        <begin position="1"/>
        <end position="351"/>
    </location>
</feature>
<feature type="region of interest" description="Disordered" evidence="2">
    <location>
        <begin position="1"/>
        <end position="24"/>
    </location>
</feature>
<feature type="compositionally biased region" description="Basic and acidic residues" evidence="2">
    <location>
        <begin position="1"/>
        <end position="11"/>
    </location>
</feature>
<feature type="compositionally biased region" description="Acidic residues" evidence="2">
    <location>
        <begin position="12"/>
        <end position="22"/>
    </location>
</feature>
<feature type="active site" description="Proton acceptor" evidence="1">
    <location>
        <position position="152"/>
    </location>
</feature>
<feature type="binding site" evidence="1">
    <location>
        <begin position="80"/>
        <end position="85"/>
    </location>
    <ligand>
        <name>3'-phosphoadenylyl sulfate</name>
        <dbReference type="ChEBI" id="CHEBI:58339"/>
    </ligand>
</feature>
<feature type="binding site" evidence="1">
    <location>
        <position position="174"/>
    </location>
    <ligand>
        <name>3'-phosphoadenylyl sulfate</name>
        <dbReference type="ChEBI" id="CHEBI:58339"/>
    </ligand>
</feature>
<feature type="binding site" evidence="1">
    <location>
        <position position="182"/>
    </location>
    <ligand>
        <name>3'-phosphoadenylyl sulfate</name>
        <dbReference type="ChEBI" id="CHEBI:58339"/>
    </ligand>
</feature>
<feature type="binding site" evidence="1">
    <location>
        <position position="252"/>
    </location>
    <ligand>
        <name>3'-phosphoadenylyl sulfate</name>
        <dbReference type="ChEBI" id="CHEBI:58339"/>
    </ligand>
</feature>
<feature type="binding site" evidence="1">
    <location>
        <begin position="317"/>
        <end position="319"/>
    </location>
    <ligand>
        <name>3'-phosphoadenylyl sulfate</name>
        <dbReference type="ChEBI" id="CHEBI:58339"/>
    </ligand>
</feature>
<dbReference type="EC" id="2.8.2.-"/>
<dbReference type="EMBL" id="AC011810">
    <property type="protein sequence ID" value="AAG09548.1"/>
    <property type="molecule type" value="Genomic_DNA"/>
</dbReference>
<dbReference type="EMBL" id="CP002684">
    <property type="protein sequence ID" value="AEE29015.1"/>
    <property type="molecule type" value="Genomic_DNA"/>
</dbReference>
<dbReference type="EMBL" id="AK118984">
    <property type="protein sequence ID" value="BAC43560.1"/>
    <property type="molecule type" value="mRNA"/>
</dbReference>
<dbReference type="EMBL" id="BT006116">
    <property type="protein sequence ID" value="AAP04101.1"/>
    <property type="molecule type" value="mRNA"/>
</dbReference>
<dbReference type="RefSeq" id="NP_172800.2">
    <property type="nucleotide sequence ID" value="NM_101213.3"/>
</dbReference>
<dbReference type="SMR" id="Q9FX55"/>
<dbReference type="BioGRID" id="23143">
    <property type="interactions" value="1"/>
</dbReference>
<dbReference type="FunCoup" id="Q9FX55">
    <property type="interactions" value="39"/>
</dbReference>
<dbReference type="STRING" id="3702.Q9FX55"/>
<dbReference type="PaxDb" id="3702-AT1G13430.1"/>
<dbReference type="ProteomicsDB" id="245330"/>
<dbReference type="EnsemblPlants" id="AT1G13430.1">
    <property type="protein sequence ID" value="AT1G13430.1"/>
    <property type="gene ID" value="AT1G13430"/>
</dbReference>
<dbReference type="GeneID" id="837903"/>
<dbReference type="Gramene" id="AT1G13430.1">
    <property type="protein sequence ID" value="AT1G13430.1"/>
    <property type="gene ID" value="AT1G13430"/>
</dbReference>
<dbReference type="KEGG" id="ath:AT1G13430"/>
<dbReference type="Araport" id="AT1G13430"/>
<dbReference type="TAIR" id="AT1G13430">
    <property type="gene designation" value="ST4C"/>
</dbReference>
<dbReference type="eggNOG" id="KOG1584">
    <property type="taxonomic scope" value="Eukaryota"/>
</dbReference>
<dbReference type="HOGENOM" id="CLU_027239_0_1_1"/>
<dbReference type="InParanoid" id="Q9FX55"/>
<dbReference type="OMA" id="HILFMRY"/>
<dbReference type="PhylomeDB" id="Q9FX55"/>
<dbReference type="BioCyc" id="ARA:AT1G13430-MONOMER"/>
<dbReference type="PRO" id="PR:Q9FX55"/>
<dbReference type="Proteomes" id="UP000006548">
    <property type="component" value="Chromosome 1"/>
</dbReference>
<dbReference type="ExpressionAtlas" id="Q9FX55">
    <property type="expression patterns" value="baseline and differential"/>
</dbReference>
<dbReference type="GO" id="GO:0005737">
    <property type="term" value="C:cytoplasm"/>
    <property type="evidence" value="ECO:0007669"/>
    <property type="project" value="UniProtKB-SubCell"/>
</dbReference>
<dbReference type="GO" id="GO:0008146">
    <property type="term" value="F:sulfotransferase activity"/>
    <property type="evidence" value="ECO:0007669"/>
    <property type="project" value="InterPro"/>
</dbReference>
<dbReference type="GO" id="GO:0009735">
    <property type="term" value="P:response to cytokinin"/>
    <property type="evidence" value="ECO:0000270"/>
    <property type="project" value="TAIR"/>
</dbReference>
<dbReference type="FunFam" id="3.40.50.300:FF:001258">
    <property type="entry name" value="Sulfotransferase"/>
    <property type="match status" value="1"/>
</dbReference>
<dbReference type="Gene3D" id="3.40.50.300">
    <property type="entry name" value="P-loop containing nucleotide triphosphate hydrolases"/>
    <property type="match status" value="1"/>
</dbReference>
<dbReference type="InterPro" id="IPR027417">
    <property type="entry name" value="P-loop_NTPase"/>
</dbReference>
<dbReference type="InterPro" id="IPR000863">
    <property type="entry name" value="Sulfotransferase_dom"/>
</dbReference>
<dbReference type="PANTHER" id="PTHR11783">
    <property type="entry name" value="SULFOTRANSFERASE SULT"/>
    <property type="match status" value="1"/>
</dbReference>
<dbReference type="Pfam" id="PF00685">
    <property type="entry name" value="Sulfotransfer_1"/>
    <property type="match status" value="1"/>
</dbReference>
<dbReference type="SUPFAM" id="SSF52540">
    <property type="entry name" value="P-loop containing nucleoside triphosphate hydrolases"/>
    <property type="match status" value="1"/>
</dbReference>
<sequence length="351" mass="40667">MDEKDILRNLREEEEEEEENQSEETKILISSLPWEIDYLGNKLFKYQGYWYYEDVLQSIPNIHSSFQPQETDIVVASFYKSGTTWLKALTFALVQRSKHSLEDHHHPLLSHNPHEIVPYLELDLYLNSSKPDLTKFLSSSSSSSSPRLFSTHMSLDALKLPLKKSPCKVVYVCRNVKDVLVSLWCFLNANKGVEWGDFSQNEKIIRAENYSFKAIFESFCNGVTLHGPFWDHAQSYWRGSLEDPKHFLFMRYEELKAEPRTQVKRLAEFLDCPFTKEEEDSGTVDKILELCSLSNLSSLEINKTGSLGGVDYKTYFRKGQVGDWKSYMTSEMVNKIDMIVEEKLKGSGLKF</sequence>
<keyword id="KW-0963">Cytoplasm</keyword>
<keyword id="KW-1185">Reference proteome</keyword>
<keyword id="KW-0808">Transferase</keyword>
<accession>Q9FX55</accession>
<organism>
    <name type="scientific">Arabidopsis thaliana</name>
    <name type="common">Mouse-ear cress</name>
    <dbReference type="NCBI Taxonomy" id="3702"/>
    <lineage>
        <taxon>Eukaryota</taxon>
        <taxon>Viridiplantae</taxon>
        <taxon>Streptophyta</taxon>
        <taxon>Embryophyta</taxon>
        <taxon>Tracheophyta</taxon>
        <taxon>Spermatophyta</taxon>
        <taxon>Magnoliopsida</taxon>
        <taxon>eudicotyledons</taxon>
        <taxon>Gunneridae</taxon>
        <taxon>Pentapetalae</taxon>
        <taxon>rosids</taxon>
        <taxon>malvids</taxon>
        <taxon>Brassicales</taxon>
        <taxon>Brassicaceae</taxon>
        <taxon>Camelineae</taxon>
        <taxon>Arabidopsis</taxon>
    </lineage>
</organism>
<evidence type="ECO:0000250" key="1"/>
<evidence type="ECO:0000256" key="2">
    <source>
        <dbReference type="SAM" id="MobiDB-lite"/>
    </source>
</evidence>
<evidence type="ECO:0000269" key="3">
    <source>
    </source>
</evidence>
<evidence type="ECO:0000305" key="4"/>
<comment type="function">
    <text evidence="3">Sulfotransferase that utilizes 3'-phospho-5'-adenylyl sulfate (PAPS) as sulfonate donor. No activity with brassinosteroids.</text>
</comment>
<comment type="subcellular location">
    <subcellularLocation>
        <location evidence="1">Cytoplasm</location>
    </subcellularLocation>
</comment>
<comment type="tissue specificity">
    <text evidence="3">Expressed in roots and leaves.</text>
</comment>
<comment type="induction">
    <text evidence="3">Up-regulated by trans-zeatin.</text>
</comment>
<comment type="similarity">
    <text evidence="4">Belongs to the sulfotransferase 1 family.</text>
</comment>
<protein>
    <recommendedName>
        <fullName>Cytosolic sulfotransferase 9</fullName>
        <shortName>AtSOT9</shortName>
        <ecNumber>2.8.2.-</ecNumber>
    </recommendedName>
    <alternativeName>
        <fullName>Sulfotransferase 4c</fullName>
        <shortName>AtST4b</shortName>
    </alternativeName>
</protein>
<gene>
    <name type="primary">STO9</name>
    <name type="synonym">ST4C</name>
    <name type="ordered locus">At1g13430</name>
    <name type="ORF">F13B4.24</name>
</gene>
<reference key="1">
    <citation type="journal article" date="2000" name="Nature">
        <title>Sequence and analysis of chromosome 1 of the plant Arabidopsis thaliana.</title>
        <authorList>
            <person name="Theologis A."/>
            <person name="Ecker J.R."/>
            <person name="Palm C.J."/>
            <person name="Federspiel N.A."/>
            <person name="Kaul S."/>
            <person name="White O."/>
            <person name="Alonso J."/>
            <person name="Altafi H."/>
            <person name="Araujo R."/>
            <person name="Bowman C.L."/>
            <person name="Brooks S.Y."/>
            <person name="Buehler E."/>
            <person name="Chan A."/>
            <person name="Chao Q."/>
            <person name="Chen H."/>
            <person name="Cheuk R.F."/>
            <person name="Chin C.W."/>
            <person name="Chung M.K."/>
            <person name="Conn L."/>
            <person name="Conway A.B."/>
            <person name="Conway A.R."/>
            <person name="Creasy T.H."/>
            <person name="Dewar K."/>
            <person name="Dunn P."/>
            <person name="Etgu P."/>
            <person name="Feldblyum T.V."/>
            <person name="Feng J.-D."/>
            <person name="Fong B."/>
            <person name="Fujii C.Y."/>
            <person name="Gill J.E."/>
            <person name="Goldsmith A.D."/>
            <person name="Haas B."/>
            <person name="Hansen N.F."/>
            <person name="Hughes B."/>
            <person name="Huizar L."/>
            <person name="Hunter J.L."/>
            <person name="Jenkins J."/>
            <person name="Johnson-Hopson C."/>
            <person name="Khan S."/>
            <person name="Khaykin E."/>
            <person name="Kim C.J."/>
            <person name="Koo H.L."/>
            <person name="Kremenetskaia I."/>
            <person name="Kurtz D.B."/>
            <person name="Kwan A."/>
            <person name="Lam B."/>
            <person name="Langin-Hooper S."/>
            <person name="Lee A."/>
            <person name="Lee J.M."/>
            <person name="Lenz C.A."/>
            <person name="Li J.H."/>
            <person name="Li Y.-P."/>
            <person name="Lin X."/>
            <person name="Liu S.X."/>
            <person name="Liu Z.A."/>
            <person name="Luros J.S."/>
            <person name="Maiti R."/>
            <person name="Marziali A."/>
            <person name="Militscher J."/>
            <person name="Miranda M."/>
            <person name="Nguyen M."/>
            <person name="Nierman W.C."/>
            <person name="Osborne B.I."/>
            <person name="Pai G."/>
            <person name="Peterson J."/>
            <person name="Pham P.K."/>
            <person name="Rizzo M."/>
            <person name="Rooney T."/>
            <person name="Rowley D."/>
            <person name="Sakano H."/>
            <person name="Salzberg S.L."/>
            <person name="Schwartz J.R."/>
            <person name="Shinn P."/>
            <person name="Southwick A.M."/>
            <person name="Sun H."/>
            <person name="Tallon L.J."/>
            <person name="Tambunga G."/>
            <person name="Toriumi M.J."/>
            <person name="Town C.D."/>
            <person name="Utterback T."/>
            <person name="Van Aken S."/>
            <person name="Vaysberg M."/>
            <person name="Vysotskaia V.S."/>
            <person name="Walker M."/>
            <person name="Wu D."/>
            <person name="Yu G."/>
            <person name="Fraser C.M."/>
            <person name="Venter J.C."/>
            <person name="Davis R.W."/>
        </authorList>
    </citation>
    <scope>NUCLEOTIDE SEQUENCE [LARGE SCALE GENOMIC DNA]</scope>
    <source>
        <strain>cv. Columbia</strain>
    </source>
</reference>
<reference key="2">
    <citation type="journal article" date="2017" name="Plant J.">
        <title>Araport11: a complete reannotation of the Arabidopsis thaliana reference genome.</title>
        <authorList>
            <person name="Cheng C.Y."/>
            <person name="Krishnakumar V."/>
            <person name="Chan A.P."/>
            <person name="Thibaud-Nissen F."/>
            <person name="Schobel S."/>
            <person name="Town C.D."/>
        </authorList>
    </citation>
    <scope>GENOME REANNOTATION</scope>
    <source>
        <strain>cv. Columbia</strain>
    </source>
</reference>
<reference key="3">
    <citation type="journal article" date="2002" name="Science">
        <title>Functional annotation of a full-length Arabidopsis cDNA collection.</title>
        <authorList>
            <person name="Seki M."/>
            <person name="Narusaka M."/>
            <person name="Kamiya A."/>
            <person name="Ishida J."/>
            <person name="Satou M."/>
            <person name="Sakurai T."/>
            <person name="Nakajima M."/>
            <person name="Enju A."/>
            <person name="Akiyama K."/>
            <person name="Oono Y."/>
            <person name="Muramatsu M."/>
            <person name="Hayashizaki Y."/>
            <person name="Kawai J."/>
            <person name="Carninci P."/>
            <person name="Itoh M."/>
            <person name="Ishii Y."/>
            <person name="Arakawa T."/>
            <person name="Shibata K."/>
            <person name="Shinagawa A."/>
            <person name="Shinozaki K."/>
        </authorList>
    </citation>
    <scope>NUCLEOTIDE SEQUENCE [LARGE SCALE MRNA]</scope>
    <source>
        <strain>cv. Columbia</strain>
    </source>
</reference>
<reference key="4">
    <citation type="journal article" date="2003" name="Science">
        <title>Empirical analysis of transcriptional activity in the Arabidopsis genome.</title>
        <authorList>
            <person name="Yamada K."/>
            <person name="Lim J."/>
            <person name="Dale J.M."/>
            <person name="Chen H."/>
            <person name="Shinn P."/>
            <person name="Palm C.J."/>
            <person name="Southwick A.M."/>
            <person name="Wu H.C."/>
            <person name="Kim C.J."/>
            <person name="Nguyen M."/>
            <person name="Pham P.K."/>
            <person name="Cheuk R.F."/>
            <person name="Karlin-Newmann G."/>
            <person name="Liu S.X."/>
            <person name="Lam B."/>
            <person name="Sakano H."/>
            <person name="Wu T."/>
            <person name="Yu G."/>
            <person name="Miranda M."/>
            <person name="Quach H.L."/>
            <person name="Tripp M."/>
            <person name="Chang C.H."/>
            <person name="Lee J.M."/>
            <person name="Toriumi M.J."/>
            <person name="Chan M.M."/>
            <person name="Tang C.C."/>
            <person name="Onodera C.S."/>
            <person name="Deng J.M."/>
            <person name="Akiyama K."/>
            <person name="Ansari Y."/>
            <person name="Arakawa T."/>
            <person name="Banh J."/>
            <person name="Banno F."/>
            <person name="Bowser L."/>
            <person name="Brooks S.Y."/>
            <person name="Carninci P."/>
            <person name="Chao Q."/>
            <person name="Choy N."/>
            <person name="Enju A."/>
            <person name="Goldsmith A.D."/>
            <person name="Gurjal M."/>
            <person name="Hansen N.F."/>
            <person name="Hayashizaki Y."/>
            <person name="Johnson-Hopson C."/>
            <person name="Hsuan V.W."/>
            <person name="Iida K."/>
            <person name="Karnes M."/>
            <person name="Khan S."/>
            <person name="Koesema E."/>
            <person name="Ishida J."/>
            <person name="Jiang P.X."/>
            <person name="Jones T."/>
            <person name="Kawai J."/>
            <person name="Kamiya A."/>
            <person name="Meyers C."/>
            <person name="Nakajima M."/>
            <person name="Narusaka M."/>
            <person name="Seki M."/>
            <person name="Sakurai T."/>
            <person name="Satou M."/>
            <person name="Tamse R."/>
            <person name="Vaysberg M."/>
            <person name="Wallender E.K."/>
            <person name="Wong C."/>
            <person name="Yamamura Y."/>
            <person name="Yuan S."/>
            <person name="Shinozaki K."/>
            <person name="Davis R.W."/>
            <person name="Theologis A."/>
            <person name="Ecker J.R."/>
        </authorList>
    </citation>
    <scope>NUCLEOTIDE SEQUENCE [LARGE SCALE MRNA]</scope>
    <source>
        <strain>cv. Columbia</strain>
    </source>
</reference>
<reference key="5">
    <citation type="journal article" date="2004" name="J. Exp. Bot.">
        <title>The multi-protein family of Arabidopsis sulphotransferases and their relatives in other plant species.</title>
        <authorList>
            <person name="Klein M."/>
            <person name="Papenbrock J."/>
        </authorList>
    </citation>
    <scope>GENE FAMILY</scope>
    <scope>NOMENCLATURE</scope>
</reference>
<reference key="6">
    <citation type="journal article" date="2007" name="Planta">
        <title>Molecular and biochemical characterization of two brassinosteroid sulfotransferases from Arabidopsis, AtST4a (At2g14920) and AtST1 (At2g03760).</title>
        <authorList>
            <person name="Marsolais F."/>
            <person name="Boyd J."/>
            <person name="Paredes Y."/>
            <person name="Schinas A.M."/>
            <person name="Garcia M."/>
            <person name="Elzein S."/>
            <person name="Varin L."/>
        </authorList>
    </citation>
    <scope>FUNCTION</scope>
    <scope>INDUCTION BY TRANS-ZEATIN</scope>
    <scope>TISSUE SPECIFICITY</scope>
    <source>
        <strain>cv. Columbia</strain>
    </source>
</reference>
<proteinExistence type="evidence at transcript level"/>